<dbReference type="EC" id="2.7.3.9" evidence="1"/>
<dbReference type="EC" id="2.7.1.202" evidence="2"/>
<dbReference type="EMBL" id="AE005674">
    <property type="protein sequence ID" value="AAN43958.1"/>
    <property type="molecule type" value="Genomic_DNA"/>
</dbReference>
<dbReference type="EMBL" id="AE014073">
    <property type="protein sequence ID" value="AAP17769.1"/>
    <property type="molecule type" value="Genomic_DNA"/>
</dbReference>
<dbReference type="RefSeq" id="NP_708251.1">
    <property type="nucleotide sequence ID" value="NC_004337.2"/>
</dbReference>
<dbReference type="SMR" id="Q83QP3"/>
<dbReference type="STRING" id="198214.SF2449"/>
<dbReference type="PaxDb" id="198214-SF2449"/>
<dbReference type="GeneID" id="1025242"/>
<dbReference type="KEGG" id="sfl:SF2449"/>
<dbReference type="KEGG" id="sfx:S2588"/>
<dbReference type="PATRIC" id="fig|198214.7.peg.2926"/>
<dbReference type="HOGENOM" id="CLU_007308_5_1_6"/>
<dbReference type="Proteomes" id="UP000001006">
    <property type="component" value="Chromosome"/>
</dbReference>
<dbReference type="Proteomes" id="UP000002673">
    <property type="component" value="Chromosome"/>
</dbReference>
<dbReference type="GO" id="GO:0005737">
    <property type="term" value="C:cytoplasm"/>
    <property type="evidence" value="ECO:0007669"/>
    <property type="project" value="UniProtKB-SubCell"/>
</dbReference>
<dbReference type="GO" id="GO:0016020">
    <property type="term" value="C:membrane"/>
    <property type="evidence" value="ECO:0007669"/>
    <property type="project" value="InterPro"/>
</dbReference>
<dbReference type="GO" id="GO:0016301">
    <property type="term" value="F:kinase activity"/>
    <property type="evidence" value="ECO:0007669"/>
    <property type="project" value="UniProtKB-KW"/>
</dbReference>
<dbReference type="GO" id="GO:0046872">
    <property type="term" value="F:metal ion binding"/>
    <property type="evidence" value="ECO:0007669"/>
    <property type="project" value="UniProtKB-KW"/>
</dbReference>
<dbReference type="GO" id="GO:0008965">
    <property type="term" value="F:phosphoenolpyruvate-protein phosphotransferase activity"/>
    <property type="evidence" value="ECO:0007669"/>
    <property type="project" value="UniProtKB-EC"/>
</dbReference>
<dbReference type="GO" id="GO:0008982">
    <property type="term" value="F:protein-N(PI)-phosphohistidine-sugar phosphotransferase activity"/>
    <property type="evidence" value="ECO:0007669"/>
    <property type="project" value="InterPro"/>
</dbReference>
<dbReference type="GO" id="GO:0009401">
    <property type="term" value="P:phosphoenolpyruvate-dependent sugar phosphotransferase system"/>
    <property type="evidence" value="ECO:0007669"/>
    <property type="project" value="UniProtKB-KW"/>
</dbReference>
<dbReference type="CDD" id="cd00367">
    <property type="entry name" value="PTS-HPr_like"/>
    <property type="match status" value="1"/>
</dbReference>
<dbReference type="CDD" id="cd00211">
    <property type="entry name" value="PTS_IIA_fru"/>
    <property type="match status" value="1"/>
</dbReference>
<dbReference type="Gene3D" id="3.30.1340.10">
    <property type="entry name" value="HPr-like"/>
    <property type="match status" value="1"/>
</dbReference>
<dbReference type="Gene3D" id="3.40.930.10">
    <property type="entry name" value="Mannitol-specific EII, Chain A"/>
    <property type="match status" value="1"/>
</dbReference>
<dbReference type="Gene3D" id="3.20.20.60">
    <property type="entry name" value="Phosphoenolpyruvate-binding domains"/>
    <property type="match status" value="1"/>
</dbReference>
<dbReference type="Gene3D" id="3.50.30.10">
    <property type="entry name" value="Phosphohistidine domain"/>
    <property type="match status" value="1"/>
</dbReference>
<dbReference type="Gene3D" id="1.10.274.10">
    <property type="entry name" value="PtsI, HPr-binding domain"/>
    <property type="match status" value="1"/>
</dbReference>
<dbReference type="InterPro" id="IPR000032">
    <property type="entry name" value="HPr-like"/>
</dbReference>
<dbReference type="InterPro" id="IPR035895">
    <property type="entry name" value="HPr-like_sf"/>
</dbReference>
<dbReference type="InterPro" id="IPR008279">
    <property type="entry name" value="PEP-util_enz_mobile_dom"/>
</dbReference>
<dbReference type="InterPro" id="IPR050499">
    <property type="entry name" value="PEP-utilizing_PTS_enzyme"/>
</dbReference>
<dbReference type="InterPro" id="IPR000121">
    <property type="entry name" value="PEP_util_C"/>
</dbReference>
<dbReference type="InterPro" id="IPR023151">
    <property type="entry name" value="PEP_util_CS"/>
</dbReference>
<dbReference type="InterPro" id="IPR036637">
    <property type="entry name" value="Phosphohistidine_dom_sf"/>
</dbReference>
<dbReference type="InterPro" id="IPR016152">
    <property type="entry name" value="PTrfase/Anion_transptr"/>
</dbReference>
<dbReference type="InterPro" id="IPR006318">
    <property type="entry name" value="PTS_EI-like"/>
</dbReference>
<dbReference type="InterPro" id="IPR002178">
    <property type="entry name" value="PTS_EIIA_type-2_dom"/>
</dbReference>
<dbReference type="InterPro" id="IPR008731">
    <property type="entry name" value="PTS_EIN"/>
</dbReference>
<dbReference type="InterPro" id="IPR004715">
    <property type="entry name" value="PTS_IIA_fruc"/>
</dbReference>
<dbReference type="InterPro" id="IPR036618">
    <property type="entry name" value="PtsI_HPr-bd_sf"/>
</dbReference>
<dbReference type="InterPro" id="IPR015813">
    <property type="entry name" value="Pyrv/PenolPyrv_kinase-like_dom"/>
</dbReference>
<dbReference type="InterPro" id="IPR040442">
    <property type="entry name" value="Pyrv_kinase-like_dom_sf"/>
</dbReference>
<dbReference type="NCBIfam" id="TIGR00848">
    <property type="entry name" value="fruA"/>
    <property type="match status" value="1"/>
</dbReference>
<dbReference type="NCBIfam" id="TIGR01417">
    <property type="entry name" value="PTS_I_fam"/>
    <property type="match status" value="1"/>
</dbReference>
<dbReference type="PANTHER" id="PTHR46244:SF4">
    <property type="entry name" value="MULTIPHOSPHORYL TRANSFER PROTEIN 1-RELATED"/>
    <property type="match status" value="1"/>
</dbReference>
<dbReference type="PANTHER" id="PTHR46244">
    <property type="entry name" value="PHOSPHOENOLPYRUVATE-PROTEIN PHOSPHOTRANSFERASE"/>
    <property type="match status" value="1"/>
</dbReference>
<dbReference type="Pfam" id="PF05524">
    <property type="entry name" value="PEP-utilisers_N"/>
    <property type="match status" value="1"/>
</dbReference>
<dbReference type="Pfam" id="PF00391">
    <property type="entry name" value="PEP-utilizers"/>
    <property type="match status" value="1"/>
</dbReference>
<dbReference type="Pfam" id="PF02896">
    <property type="entry name" value="PEP-utilizers_C"/>
    <property type="match status" value="1"/>
</dbReference>
<dbReference type="Pfam" id="PF00381">
    <property type="entry name" value="PTS-HPr"/>
    <property type="match status" value="1"/>
</dbReference>
<dbReference type="Pfam" id="PF00359">
    <property type="entry name" value="PTS_EIIA_2"/>
    <property type="match status" value="1"/>
</dbReference>
<dbReference type="PRINTS" id="PR01736">
    <property type="entry name" value="PHPHTRNFRASE"/>
</dbReference>
<dbReference type="SUPFAM" id="SSF47831">
    <property type="entry name" value="Enzyme I of the PEP:sugar phosphotransferase system HPr-binding (sub)domain"/>
    <property type="match status" value="1"/>
</dbReference>
<dbReference type="SUPFAM" id="SSF55594">
    <property type="entry name" value="HPr-like"/>
    <property type="match status" value="1"/>
</dbReference>
<dbReference type="SUPFAM" id="SSF55804">
    <property type="entry name" value="Phoshotransferase/anion transport protein"/>
    <property type="match status" value="1"/>
</dbReference>
<dbReference type="SUPFAM" id="SSF51621">
    <property type="entry name" value="Phosphoenolpyruvate/pyruvate domain"/>
    <property type="match status" value="1"/>
</dbReference>
<dbReference type="SUPFAM" id="SSF52009">
    <property type="entry name" value="Phosphohistidine domain"/>
    <property type="match status" value="1"/>
</dbReference>
<dbReference type="PROSITE" id="PS00742">
    <property type="entry name" value="PEP_ENZYMES_2"/>
    <property type="match status" value="1"/>
</dbReference>
<dbReference type="PROSITE" id="PS51094">
    <property type="entry name" value="PTS_EIIA_TYPE_2"/>
    <property type="match status" value="1"/>
</dbReference>
<dbReference type="PROSITE" id="PS51350">
    <property type="entry name" value="PTS_HPR_DOM"/>
    <property type="match status" value="1"/>
</dbReference>
<reference key="1">
    <citation type="journal article" date="2002" name="Nucleic Acids Res.">
        <title>Genome sequence of Shigella flexneri 2a: insights into pathogenicity through comparison with genomes of Escherichia coli K12 and O157.</title>
        <authorList>
            <person name="Jin Q."/>
            <person name="Yuan Z."/>
            <person name="Xu J."/>
            <person name="Wang Y."/>
            <person name="Shen Y."/>
            <person name="Lu W."/>
            <person name="Wang J."/>
            <person name="Liu H."/>
            <person name="Yang J."/>
            <person name="Yang F."/>
            <person name="Zhang X."/>
            <person name="Zhang J."/>
            <person name="Yang G."/>
            <person name="Wu H."/>
            <person name="Qu D."/>
            <person name="Dong J."/>
            <person name="Sun L."/>
            <person name="Xue Y."/>
            <person name="Zhao A."/>
            <person name="Gao Y."/>
            <person name="Zhu J."/>
            <person name="Kan B."/>
            <person name="Ding K."/>
            <person name="Chen S."/>
            <person name="Cheng H."/>
            <person name="Yao Z."/>
            <person name="He B."/>
            <person name="Chen R."/>
            <person name="Ma D."/>
            <person name="Qiang B."/>
            <person name="Wen Y."/>
            <person name="Hou Y."/>
            <person name="Yu J."/>
        </authorList>
    </citation>
    <scope>NUCLEOTIDE SEQUENCE [LARGE SCALE GENOMIC DNA]</scope>
    <source>
        <strain>301 / Serotype 2a</strain>
    </source>
</reference>
<reference key="2">
    <citation type="journal article" date="2003" name="Infect. Immun.">
        <title>Complete genome sequence and comparative genomics of Shigella flexneri serotype 2a strain 2457T.</title>
        <authorList>
            <person name="Wei J."/>
            <person name="Goldberg M.B."/>
            <person name="Burland V."/>
            <person name="Venkatesan M.M."/>
            <person name="Deng W."/>
            <person name="Fournier G."/>
            <person name="Mayhew G.F."/>
            <person name="Plunkett G. III"/>
            <person name="Rose D.J."/>
            <person name="Darling A."/>
            <person name="Mau B."/>
            <person name="Perna N.T."/>
            <person name="Payne S.M."/>
            <person name="Runyen-Janecky L.J."/>
            <person name="Zhou S."/>
            <person name="Schwartz D.C."/>
            <person name="Blattner F.R."/>
        </authorList>
    </citation>
    <scope>NUCLEOTIDE SEQUENCE [LARGE SCALE GENOMIC DNA]</scope>
    <source>
        <strain>ATCC 700930 / 2457T / Serotype 2a</strain>
    </source>
</reference>
<name>PTFX_SHIFL</name>
<keyword id="KW-0963">Cytoplasm</keyword>
<keyword id="KW-0418">Kinase</keyword>
<keyword id="KW-0460">Magnesium</keyword>
<keyword id="KW-0479">Metal-binding</keyword>
<keyword id="KW-0597">Phosphoprotein</keyword>
<keyword id="KW-0598">Phosphotransferase system</keyword>
<keyword id="KW-1185">Reference proteome</keyword>
<keyword id="KW-0762">Sugar transport</keyword>
<keyword id="KW-0808">Transferase</keyword>
<keyword id="KW-0813">Transport</keyword>
<evidence type="ECO:0000250" key="1">
    <source>
        <dbReference type="UniProtKB" id="P08839"/>
    </source>
</evidence>
<evidence type="ECO:0000250" key="2">
    <source>
        <dbReference type="UniProtKB" id="P20966"/>
    </source>
</evidence>
<evidence type="ECO:0000250" key="3">
    <source>
        <dbReference type="UniProtKB" id="P23533"/>
    </source>
</evidence>
<evidence type="ECO:0000250" key="4">
    <source>
        <dbReference type="UniProtKB" id="P77439"/>
    </source>
</evidence>
<evidence type="ECO:0000255" key="5">
    <source>
        <dbReference type="PROSITE-ProRule" id="PRU00417"/>
    </source>
</evidence>
<evidence type="ECO:0000255" key="6">
    <source>
        <dbReference type="PROSITE-ProRule" id="PRU00681"/>
    </source>
</evidence>
<evidence type="ECO:0000305" key="7"/>
<proteinExistence type="inferred from homology"/>
<organism>
    <name type="scientific">Shigella flexneri</name>
    <dbReference type="NCBI Taxonomy" id="623"/>
    <lineage>
        <taxon>Bacteria</taxon>
        <taxon>Pseudomonadati</taxon>
        <taxon>Pseudomonadota</taxon>
        <taxon>Gammaproteobacteria</taxon>
        <taxon>Enterobacterales</taxon>
        <taxon>Enterobacteriaceae</taxon>
        <taxon>Shigella</taxon>
    </lineage>
</organism>
<comment type="function">
    <text evidence="4">Multifunctional protein that includes general (non sugar-specific) and sugar-specific components of the phosphoenolpyruvate-dependent sugar phosphotransferase system (sugar PTS). This major carbohydrate active transport system catalyzes the phosphorylation of incoming sugar substrates concomitantly with their translocation across the cell membrane. The enzyme II FryABC PTS system is involved in fructose transport.</text>
</comment>
<comment type="catalytic activity">
    <reaction evidence="1">
        <text>L-histidyl-[protein] + phosphoenolpyruvate = N(pros)-phospho-L-histidyl-[protein] + pyruvate</text>
        <dbReference type="Rhea" id="RHEA:23880"/>
        <dbReference type="Rhea" id="RHEA-COMP:9745"/>
        <dbReference type="Rhea" id="RHEA-COMP:9746"/>
        <dbReference type="ChEBI" id="CHEBI:15361"/>
        <dbReference type="ChEBI" id="CHEBI:29979"/>
        <dbReference type="ChEBI" id="CHEBI:58702"/>
        <dbReference type="ChEBI" id="CHEBI:64837"/>
        <dbReference type="EC" id="2.7.3.9"/>
    </reaction>
</comment>
<comment type="catalytic activity">
    <reaction evidence="2">
        <text>D-fructose(out) + N(pros)-phospho-L-histidyl-[protein] = D-fructose 1-phosphate(in) + L-histidyl-[protein]</text>
        <dbReference type="Rhea" id="RHEA:49252"/>
        <dbReference type="Rhea" id="RHEA-COMP:9745"/>
        <dbReference type="Rhea" id="RHEA-COMP:9746"/>
        <dbReference type="ChEBI" id="CHEBI:29979"/>
        <dbReference type="ChEBI" id="CHEBI:37721"/>
        <dbReference type="ChEBI" id="CHEBI:58674"/>
        <dbReference type="ChEBI" id="CHEBI:64837"/>
        <dbReference type="EC" id="2.7.1.202"/>
    </reaction>
</comment>
<comment type="cofactor">
    <cofactor evidence="1">
        <name>Mg(2+)</name>
        <dbReference type="ChEBI" id="CHEBI:18420"/>
    </cofactor>
</comment>
<comment type="subcellular location">
    <subcellularLocation>
        <location evidence="7">Cytoplasm</location>
    </subcellularLocation>
</comment>
<comment type="domain">
    <text evidence="5">The PTS EIIA type-2 domain is phosphorylated by phospho-HPr on a histidyl residue. Then, it transfers the phosphoryl group to the PTS EIIB type-2 domain.</text>
</comment>
<comment type="domain">
    <text evidence="7">In contrast to classical PTS systems, the fructose-like PTS has no requirement for HPr and Enzyme I; FryA combines a IIA domain with an Enzyme I and a HPr domains.</text>
</comment>
<comment type="similarity">
    <text evidence="7">Belongs to the PEP-utilizing enzyme family.</text>
</comment>
<feature type="chain" id="PRO_0000147100" description="Multiphosphoryl transfer protein">
    <location>
        <begin position="1"/>
        <end position="831"/>
    </location>
</feature>
<feature type="domain" description="HPr" evidence="6">
    <location>
        <begin position="1"/>
        <end position="90"/>
    </location>
</feature>
<feature type="domain" description="PTS EIIA type-2" evidence="5">
    <location>
        <begin position="685"/>
        <end position="828"/>
    </location>
</feature>
<feature type="region of interest" description="PTS EI" evidence="4">
    <location>
        <begin position="119"/>
        <end position="650"/>
    </location>
</feature>
<feature type="active site" description="Pros-phosphohistidine intermediate; for HPr activity" evidence="6">
    <location>
        <position position="15"/>
    </location>
</feature>
<feature type="active site" description="Tele-phosphohistidine intermediate; for PTS EI activity" evidence="1 5">
    <location>
        <position position="298"/>
    </location>
</feature>
<feature type="active site" description="Proton donor; for EI activity" evidence="1">
    <location>
        <position position="611"/>
    </location>
</feature>
<feature type="active site" description="Tele-phosphohistidine intermediate; for PTS EIIA activity" evidence="5">
    <location>
        <position position="747"/>
    </location>
</feature>
<feature type="binding site" evidence="3">
    <location>
        <position position="405"/>
    </location>
    <ligand>
        <name>phosphoenolpyruvate</name>
        <dbReference type="ChEBI" id="CHEBI:58702"/>
    </ligand>
</feature>
<feature type="binding site" evidence="1">
    <location>
        <position position="441"/>
    </location>
    <ligand>
        <name>phosphoenolpyruvate</name>
        <dbReference type="ChEBI" id="CHEBI:58702"/>
    </ligand>
</feature>
<feature type="binding site" evidence="1">
    <location>
        <position position="540"/>
    </location>
    <ligand>
        <name>Mg(2+)</name>
        <dbReference type="ChEBI" id="CHEBI:18420"/>
    </ligand>
</feature>
<feature type="binding site" evidence="1">
    <location>
        <begin position="563"/>
        <end position="564"/>
    </location>
    <ligand>
        <name>phosphoenolpyruvate</name>
        <dbReference type="ChEBI" id="CHEBI:58702"/>
    </ligand>
</feature>
<feature type="binding site" evidence="1">
    <location>
        <position position="564"/>
    </location>
    <ligand>
        <name>Mg(2+)</name>
        <dbReference type="ChEBI" id="CHEBI:18420"/>
    </ligand>
</feature>
<feature type="binding site" evidence="3">
    <location>
        <position position="574"/>
    </location>
    <ligand>
        <name>phosphoenolpyruvate</name>
        <dbReference type="ChEBI" id="CHEBI:58702"/>
    </ligand>
</feature>
<feature type="modified residue" description="Phosphohistidine; by EI" evidence="7">
    <location>
        <position position="15"/>
    </location>
</feature>
<feature type="modified residue" description="Phosphohistidine; by autocatalysis" evidence="7">
    <location>
        <position position="298"/>
    </location>
</feature>
<feature type="modified residue" description="Phosphohistidine; by HPr" evidence="7">
    <location>
        <position position="747"/>
    </location>
</feature>
<feature type="sequence conflict" description="In Ref. 2; AAP17769." evidence="7" ref="2">
    <original>V</original>
    <variation>A</variation>
    <location>
        <position position="381"/>
    </location>
</feature>
<gene>
    <name type="primary">fryA</name>
    <name type="ordered locus">SF2449</name>
    <name type="ordered locus">S2588</name>
</gene>
<sequence>MLTIQFLCPLPNGLHARPAWELKEQCSQWQSEITFINHRQNAKADAKSSLALIGTGTLFNDSCSLNISGSDEEQARRVLEEYILVRFIDSDSVQPTQAELTAHPLPRSLSRLNPDLLYGNVLASGVGVGTLTLLQSDSLDSYRAIPASAQDSTRLEHSLATLAEQLNQQLRERDGESKTILSAHLSLIQDDEFAGNIRRLMTEQHQGLGAAIISNMEQVCAKLSASASDYLRERVSDIRDISEQLLHITWPELKPRNNLVLEKPTILVAEDLTPSQFLSLDLKNLAGMILEKTGRTSHTLILARASAIPVLSGLPLDAIARYAGQPAVLDAQCGVLAINPNDAVSGYYQVAQTLADKRQKQQAQAAAQLAYSRDNKRIDIVANIGTALEAPGAFANGAEGVGLFRTEMLYMDRDSAPDEQEQFEAYQQVLLAAGDKPIIFRTMDIGGDKSIPYLNIPQEENPFLGYRAVRIYPEFAGLFRTQLRAILRAASFGNAQLMIPMVHSLDQILWVKGEIQKAIVELKRDGLRHAETITLGIMVEVPSVCYIIDHFCDEVDFFSIGSNDMTQYLYAVDRNNPRVSPLYNPITPSFLRMLQQIVTTAHQRGKWVGICGELGGESRYLPLLLGLGLDELSMSSPRIPAVKSQLRQLDSEACRELARQACECRSAQEIEALLTAFTPEEDVRPLLALENIFVDQDFSNKEQAIQFLCGNLGVNGRTEHPFELEEDVWQREEIVTTGVGFGVAIPHTKSQWIRHSSISIARLAKPVDWQSEMGEVELVIMLTLGANEGMNHVKVFSQLARKLVNKNFRQSLFAAQDAQSILTLLETELTF</sequence>
<protein>
    <recommendedName>
        <fullName evidence="4">Multiphosphoryl transfer protein</fullName>
        <shortName evidence="4">MTP</shortName>
    </recommendedName>
    <alternativeName>
        <fullName evidence="4">Triphosphoryl transfer protein</fullName>
        <shortName evidence="4">TTP</shortName>
    </alternativeName>
    <domain>
        <recommendedName>
            <fullName evidence="4">Phosphoenolpyruvate-protein phosphotransferase</fullName>
            <ecNumber evidence="1">2.7.3.9</ecNumber>
        </recommendedName>
        <alternativeName>
            <fullName evidence="4">Phosphotransferase system enzyme I</fullName>
        </alternativeName>
    </domain>
    <domain>
        <recommendedName>
            <fullName evidence="4">Phosphocarrier protein HPr</fullName>
            <shortName evidence="4">Protein H</shortName>
        </recommendedName>
    </domain>
    <domain>
        <recommendedName>
            <fullName evidence="4">PTS system fructose-like EIIA component</fullName>
            <ecNumber evidence="2">2.7.1.202</ecNumber>
        </recommendedName>
        <alternativeName>
            <fullName evidence="4">Fructose-like phosphotransferase enzyme IIA component</fullName>
        </alternativeName>
    </domain>
</protein>
<accession>Q83QP3</accession>